<comment type="function">
    <text evidence="1">DNA-dependent RNA polymerase catalyzes the transcription of DNA into RNA using the four ribonucleoside triphosphates as substrates.</text>
</comment>
<comment type="catalytic activity">
    <reaction evidence="1">
        <text>RNA(n) + a ribonucleoside 5'-triphosphate = RNA(n+1) + diphosphate</text>
        <dbReference type="Rhea" id="RHEA:21248"/>
        <dbReference type="Rhea" id="RHEA-COMP:14527"/>
        <dbReference type="Rhea" id="RHEA-COMP:17342"/>
        <dbReference type="ChEBI" id="CHEBI:33019"/>
        <dbReference type="ChEBI" id="CHEBI:61557"/>
        <dbReference type="ChEBI" id="CHEBI:140395"/>
        <dbReference type="EC" id="2.7.7.6"/>
    </reaction>
</comment>
<comment type="subunit">
    <text evidence="1">The RNAP catalytic core consists of 2 alpha, 1 beta, 1 beta' and 1 omega subunit. When a sigma factor is associated with the core the holoenzyme is formed, which can initiate transcription.</text>
</comment>
<comment type="similarity">
    <text evidence="1">Belongs to the RNA polymerase beta chain family.</text>
</comment>
<reference key="1">
    <citation type="journal article" date="2006" name="Genome Biol.">
        <title>Genomic analysis reveals that Pseudomonas aeruginosa virulence is combinatorial.</title>
        <authorList>
            <person name="Lee D.G."/>
            <person name="Urbach J.M."/>
            <person name="Wu G."/>
            <person name="Liberati N.T."/>
            <person name="Feinbaum R.L."/>
            <person name="Miyata S."/>
            <person name="Diggins L.T."/>
            <person name="He J."/>
            <person name="Saucier M."/>
            <person name="Deziel E."/>
            <person name="Friedman L."/>
            <person name="Li L."/>
            <person name="Grills G."/>
            <person name="Montgomery K."/>
            <person name="Kucherlapati R."/>
            <person name="Rahme L.G."/>
            <person name="Ausubel F.M."/>
        </authorList>
    </citation>
    <scope>NUCLEOTIDE SEQUENCE [LARGE SCALE GENOMIC DNA]</scope>
    <source>
        <strain>UCBPP-PA14</strain>
    </source>
</reference>
<gene>
    <name evidence="1" type="primary">rpoB</name>
    <name type="ordered locus">PA14_08760</name>
</gene>
<accession>Q02T87</accession>
<dbReference type="EC" id="2.7.7.6" evidence="1"/>
<dbReference type="EMBL" id="CP000438">
    <property type="protein sequence ID" value="ABJ13541.1"/>
    <property type="molecule type" value="Genomic_DNA"/>
</dbReference>
<dbReference type="RefSeq" id="WP_011666539.1">
    <property type="nucleotide sequence ID" value="NZ_CP034244.1"/>
</dbReference>
<dbReference type="SMR" id="Q02T87"/>
<dbReference type="KEGG" id="pau:PA14_08760"/>
<dbReference type="PseudoCAP" id="PA14_08760"/>
<dbReference type="HOGENOM" id="CLU_000524_4_0_6"/>
<dbReference type="BioCyc" id="PAER208963:G1G74-729-MONOMER"/>
<dbReference type="Proteomes" id="UP000000653">
    <property type="component" value="Chromosome"/>
</dbReference>
<dbReference type="GO" id="GO:0000428">
    <property type="term" value="C:DNA-directed RNA polymerase complex"/>
    <property type="evidence" value="ECO:0007669"/>
    <property type="project" value="UniProtKB-KW"/>
</dbReference>
<dbReference type="GO" id="GO:0003677">
    <property type="term" value="F:DNA binding"/>
    <property type="evidence" value="ECO:0007669"/>
    <property type="project" value="UniProtKB-UniRule"/>
</dbReference>
<dbReference type="GO" id="GO:0003899">
    <property type="term" value="F:DNA-directed RNA polymerase activity"/>
    <property type="evidence" value="ECO:0007669"/>
    <property type="project" value="UniProtKB-UniRule"/>
</dbReference>
<dbReference type="GO" id="GO:0032549">
    <property type="term" value="F:ribonucleoside binding"/>
    <property type="evidence" value="ECO:0007669"/>
    <property type="project" value="InterPro"/>
</dbReference>
<dbReference type="GO" id="GO:0006351">
    <property type="term" value="P:DNA-templated transcription"/>
    <property type="evidence" value="ECO:0007669"/>
    <property type="project" value="UniProtKB-UniRule"/>
</dbReference>
<dbReference type="CDD" id="cd00653">
    <property type="entry name" value="RNA_pol_B_RPB2"/>
    <property type="match status" value="1"/>
</dbReference>
<dbReference type="FunFam" id="2.40.50.100:FF:000006">
    <property type="entry name" value="DNA-directed RNA polymerase subunit beta"/>
    <property type="match status" value="1"/>
</dbReference>
<dbReference type="FunFam" id="2.40.50.150:FF:000001">
    <property type="entry name" value="DNA-directed RNA polymerase subunit beta"/>
    <property type="match status" value="1"/>
</dbReference>
<dbReference type="FunFam" id="3.90.1110.10:FF:000001">
    <property type="entry name" value="DNA-directed RNA polymerase subunit beta"/>
    <property type="match status" value="1"/>
</dbReference>
<dbReference type="FunFam" id="3.90.1110.10:FF:000004">
    <property type="entry name" value="DNA-directed RNA polymerase subunit beta"/>
    <property type="match status" value="1"/>
</dbReference>
<dbReference type="FunFam" id="3.90.1800.10:FF:000001">
    <property type="entry name" value="DNA-directed RNA polymerase subunit beta"/>
    <property type="match status" value="1"/>
</dbReference>
<dbReference type="Gene3D" id="2.40.50.100">
    <property type="match status" value="1"/>
</dbReference>
<dbReference type="Gene3D" id="2.40.50.150">
    <property type="match status" value="1"/>
</dbReference>
<dbReference type="Gene3D" id="3.90.1100.10">
    <property type="match status" value="2"/>
</dbReference>
<dbReference type="Gene3D" id="6.10.140.1670">
    <property type="match status" value="1"/>
</dbReference>
<dbReference type="Gene3D" id="2.30.150.10">
    <property type="entry name" value="DNA-directed RNA polymerase, beta subunit, external 1 domain"/>
    <property type="match status" value="1"/>
</dbReference>
<dbReference type="Gene3D" id="2.40.270.10">
    <property type="entry name" value="DNA-directed RNA polymerase, subunit 2, domain 6"/>
    <property type="match status" value="1"/>
</dbReference>
<dbReference type="Gene3D" id="3.90.1800.10">
    <property type="entry name" value="RNA polymerase alpha subunit dimerisation domain"/>
    <property type="match status" value="1"/>
</dbReference>
<dbReference type="Gene3D" id="3.90.1110.10">
    <property type="entry name" value="RNA polymerase Rpb2, domain 2"/>
    <property type="match status" value="1"/>
</dbReference>
<dbReference type="HAMAP" id="MF_01321">
    <property type="entry name" value="RNApol_bact_RpoB"/>
    <property type="match status" value="1"/>
</dbReference>
<dbReference type="InterPro" id="IPR042107">
    <property type="entry name" value="DNA-dir_RNA_pol_bsu_ext_1_sf"/>
</dbReference>
<dbReference type="InterPro" id="IPR019462">
    <property type="entry name" value="DNA-dir_RNA_pol_bsu_external_1"/>
</dbReference>
<dbReference type="InterPro" id="IPR015712">
    <property type="entry name" value="DNA-dir_RNA_pol_su2"/>
</dbReference>
<dbReference type="InterPro" id="IPR007120">
    <property type="entry name" value="DNA-dir_RNAP_su2_dom"/>
</dbReference>
<dbReference type="InterPro" id="IPR037033">
    <property type="entry name" value="DNA-dir_RNAP_su2_hyb_sf"/>
</dbReference>
<dbReference type="InterPro" id="IPR010243">
    <property type="entry name" value="RNA_pol_bsu_bac"/>
</dbReference>
<dbReference type="InterPro" id="IPR007121">
    <property type="entry name" value="RNA_pol_bsu_CS"/>
</dbReference>
<dbReference type="InterPro" id="IPR007644">
    <property type="entry name" value="RNA_pol_bsu_protrusion"/>
</dbReference>
<dbReference type="InterPro" id="IPR007642">
    <property type="entry name" value="RNA_pol_Rpb2_2"/>
</dbReference>
<dbReference type="InterPro" id="IPR037034">
    <property type="entry name" value="RNA_pol_Rpb2_2_sf"/>
</dbReference>
<dbReference type="InterPro" id="IPR007645">
    <property type="entry name" value="RNA_pol_Rpb2_3"/>
</dbReference>
<dbReference type="InterPro" id="IPR007641">
    <property type="entry name" value="RNA_pol_Rpb2_7"/>
</dbReference>
<dbReference type="InterPro" id="IPR014724">
    <property type="entry name" value="RNA_pol_RPB2_OB-fold"/>
</dbReference>
<dbReference type="NCBIfam" id="NF001616">
    <property type="entry name" value="PRK00405.1"/>
    <property type="match status" value="1"/>
</dbReference>
<dbReference type="NCBIfam" id="TIGR02013">
    <property type="entry name" value="rpoB"/>
    <property type="match status" value="1"/>
</dbReference>
<dbReference type="PANTHER" id="PTHR20856">
    <property type="entry name" value="DNA-DIRECTED RNA POLYMERASE I SUBUNIT 2"/>
    <property type="match status" value="1"/>
</dbReference>
<dbReference type="Pfam" id="PF04563">
    <property type="entry name" value="RNA_pol_Rpb2_1"/>
    <property type="match status" value="1"/>
</dbReference>
<dbReference type="Pfam" id="PF04561">
    <property type="entry name" value="RNA_pol_Rpb2_2"/>
    <property type="match status" value="2"/>
</dbReference>
<dbReference type="Pfam" id="PF04565">
    <property type="entry name" value="RNA_pol_Rpb2_3"/>
    <property type="match status" value="1"/>
</dbReference>
<dbReference type="Pfam" id="PF10385">
    <property type="entry name" value="RNA_pol_Rpb2_45"/>
    <property type="match status" value="1"/>
</dbReference>
<dbReference type="Pfam" id="PF00562">
    <property type="entry name" value="RNA_pol_Rpb2_6"/>
    <property type="match status" value="1"/>
</dbReference>
<dbReference type="Pfam" id="PF04560">
    <property type="entry name" value="RNA_pol_Rpb2_7"/>
    <property type="match status" value="1"/>
</dbReference>
<dbReference type="SUPFAM" id="SSF64484">
    <property type="entry name" value="beta and beta-prime subunits of DNA dependent RNA-polymerase"/>
    <property type="match status" value="1"/>
</dbReference>
<dbReference type="PROSITE" id="PS01166">
    <property type="entry name" value="RNA_POL_BETA"/>
    <property type="match status" value="1"/>
</dbReference>
<protein>
    <recommendedName>
        <fullName evidence="1">DNA-directed RNA polymerase subunit beta</fullName>
        <shortName evidence="1">RNAP subunit beta</shortName>
        <ecNumber evidence="1">2.7.7.6</ecNumber>
    </recommendedName>
    <alternativeName>
        <fullName evidence="1">RNA polymerase subunit beta</fullName>
    </alternativeName>
    <alternativeName>
        <fullName evidence="1">Transcriptase subunit beta</fullName>
    </alternativeName>
</protein>
<feature type="chain" id="PRO_0000300375" description="DNA-directed RNA polymerase subunit beta">
    <location>
        <begin position="1"/>
        <end position="1357"/>
    </location>
</feature>
<evidence type="ECO:0000255" key="1">
    <source>
        <dbReference type="HAMAP-Rule" id="MF_01321"/>
    </source>
</evidence>
<proteinExistence type="inferred from homology"/>
<keyword id="KW-0240">DNA-directed RNA polymerase</keyword>
<keyword id="KW-0548">Nucleotidyltransferase</keyword>
<keyword id="KW-0804">Transcription</keyword>
<keyword id="KW-0808">Transferase</keyword>
<sequence length="1357" mass="150794">MAYSYTEKKRIRKDFSKLPDVMDVPYLLAIQLDSYREFLQAGATKEQFRDIGLHAAFKSVFPIISYSGNAALEYVGYRLGEPAFDVKECVLRGVTFAVPLRVKVRLIIFDRESSNKAIKDIKEQEVYMGEIPLMTENGTFIINGTERVIVSQLHRSPGVFFDHDRGKTHSSGKLLYSARIIPYRGSWLDFEFDPKDCVFVRIDRRRKLPASVLLRALGYSTEEILNAFYATNVFHIKGETLNLELVPQRLRGEVASIDIKDGSGKVIVEQGRRITARHINQLEKAGVSQLEVPFDYLIGRTIAKAIVHPATGEIIAECNTELTLDLLAKVAKAQVVRIETLYTNDIDCGPFISDTLKIDNTSNQLEALVEIYRMMRPGEPPTKEAAETLFGNLFFSAERYDLSAVGRMKFNRRIGRTEIEGPGVLSKEDIIDVLKTLVDIRNGKGIVDDIDHLGNRRVRCVGEMAENQFRVGLVRVERAVKERLSMAESEGLMPQDLINAKPVAAAIKEFFGSSQLSQFMGQNNPLSEITHKRRVSALGPGGLTRERAGFEVRDVHPTHYGRVCPIETPEGPNIGLINSLATYARTNKYGFLESPYRVVKDSLVTDEIVFLSAIEEADHVIAQASATLNEKGQLVDELVAVRHLNEFTVKAPEDVTLMDVSPKQVVSVAASLIPFLEHDDANRALMGSNMQRQAVPTLRADKPLVGTGMERNVARDSGVCVVARRGGVIDSVDASRVVVRVADDEVETGEAGVDIYNLTKYTRSNQNTCINQRPLVSKGDVVARGDILADGPSTDMGELALGQNMRVAFMPWNGFNFEDSICLSERVVQEDRFTTIHIQELTCVARDTKLGPEEITADIPNVGEAALNKLDEAGIVYVGAEVQAGDILVGKVTPKGETQLTPEEKLLRAIFGEKASDVKDTSLRVPTGTKGTVIDVQVFTRDGVERDSRALSIEKMQLDQIRKDLNEEFRIVEGATFERLRAALVGAKAEGGPALKKGTEITDDYLDGLERGQWFKLRMADDALNEQLEKAQAYISDRRQLLDDKFEDKKRKLQQGDDLAPGVLKIVKVYLAIKRRIQPGDKMAGRHGNKGVVSVIMPVEDMPHDANGTPVDIVLNPLGVPSRMNVGQILETHLGLAAKGLGEKINRMLEEQRKVAELRKFLHEIYNEIGGREENLDELGDNEILALAKNLRGGVPMATPVFDGAKEREIKAMLKLADLPESGQMRLFDGRTGNQFERPTTVGYMYMLKLNHLVDDKMHARSTGSYSLVTQQPLGGKAQFGGQRFGEMEVWALEAYGAAYTLQEMLTVKSDDVNGRTKMYKNIVDGDHRMEAGMPESFNVLIKEIRSLGIDIELETE</sequence>
<organism>
    <name type="scientific">Pseudomonas aeruginosa (strain UCBPP-PA14)</name>
    <dbReference type="NCBI Taxonomy" id="208963"/>
    <lineage>
        <taxon>Bacteria</taxon>
        <taxon>Pseudomonadati</taxon>
        <taxon>Pseudomonadota</taxon>
        <taxon>Gammaproteobacteria</taxon>
        <taxon>Pseudomonadales</taxon>
        <taxon>Pseudomonadaceae</taxon>
        <taxon>Pseudomonas</taxon>
    </lineage>
</organism>
<name>RPOB_PSEAB</name>